<organism>
    <name type="scientific">Phytophthora infestans</name>
    <name type="common">Potato late blight agent</name>
    <name type="synonym">Botrytis infestans</name>
    <dbReference type="NCBI Taxonomy" id="4787"/>
    <lineage>
        <taxon>Eukaryota</taxon>
        <taxon>Sar</taxon>
        <taxon>Stramenopiles</taxon>
        <taxon>Oomycota</taxon>
        <taxon>Peronosporales</taxon>
        <taxon>Peronosporaceae</taxon>
        <taxon>Phytophthora</taxon>
    </lineage>
</organism>
<reference key="1">
    <citation type="journal article" date="1991" name="Plant Mol. Biol.">
        <title>An in planta induced gene of Phytophthora infestans codes for ubiquitin.</title>
        <authorList>
            <person name="Pieterse C.M.J."/>
            <person name="Risseeuw E.P."/>
            <person name="Davidse L.C."/>
        </authorList>
    </citation>
    <scope>NUCLEOTIDE SEQUENCE [GENOMIC DNA]</scope>
    <source>
        <strain>Isolate 88069</strain>
    </source>
</reference>
<protein>
    <recommendedName>
        <fullName>Polyubiquitin</fullName>
    </recommendedName>
    <component>
        <recommendedName>
            <fullName>Ubiquitin</fullName>
        </recommendedName>
    </component>
</protein>
<name>UBIQP_PHYIN</name>
<proteinExistence type="evidence at protein level"/>
<sequence>MQIFVKTLTGKTITLDVEPSDSIDNVKQKIQDKEGIPPDQQRLIFAGKQLEDGRTLSDYNIQKESTLHLVLRLRGGMQIFVKTLTGKTITLDVEPSDSIDNVKQKIQDKEGIPPDQQRLIFAGKQLEDGRTLSDYNIQKESTLHLVLRLRGGMQIFVKTLTGKTITLDVEPSDSIDNVKQKIQDKEGIPPDQQRLIFAGKQLEDGRTLSDYNIQKESTLHLVLRLRGGN</sequence>
<feature type="chain" id="PRO_0000114859" description="Ubiquitin">
    <location>
        <begin position="1"/>
        <end position="76"/>
    </location>
</feature>
<feature type="chain" id="PRO_0000396374" description="Ubiquitin">
    <location>
        <begin position="77"/>
        <end position="152"/>
    </location>
</feature>
<feature type="chain" id="PRO_0000396375" description="Ubiquitin">
    <location>
        <begin position="153"/>
        <end position="228"/>
    </location>
</feature>
<feature type="propeptide" id="PRO_0000396376">
    <location>
        <position position="229"/>
    </location>
</feature>
<feature type="domain" description="Ubiquitin-like 1" evidence="2">
    <location>
        <begin position="1"/>
        <end position="76"/>
    </location>
</feature>
<feature type="domain" description="Ubiquitin-like 2" evidence="2">
    <location>
        <begin position="77"/>
        <end position="152"/>
    </location>
</feature>
<feature type="domain" description="Ubiquitin-like 3" evidence="2">
    <location>
        <begin position="153"/>
        <end position="228"/>
    </location>
</feature>
<feature type="cross-link" description="Glycyl lysine isopeptide (Lys-Gly) (interchain with G-Cter in ubiquitin)">
    <location>
        <position position="6"/>
    </location>
</feature>
<feature type="cross-link" description="Glycyl lysine isopeptide (Lys-Gly) (interchain with G-Cter in ubiquitin)">
    <location>
        <position position="11"/>
    </location>
</feature>
<feature type="cross-link" description="Glycyl lysine isopeptide (Lys-Gly) (interchain with G-Cter in ubiquitin)">
    <location>
        <position position="27"/>
    </location>
</feature>
<feature type="cross-link" description="Glycyl lysine isopeptide (Lys-Gly) (interchain with G-Cter in ubiquitin)">
    <location>
        <position position="29"/>
    </location>
</feature>
<feature type="cross-link" description="Glycyl lysine isopeptide (Lys-Gly) (interchain with G-Cter in ubiquitin)">
    <location>
        <position position="33"/>
    </location>
</feature>
<feature type="cross-link" description="Glycyl lysine isopeptide (Lys-Gly) (interchain with G-Cter in ubiquitin)" evidence="1">
    <location>
        <position position="48"/>
    </location>
</feature>
<feature type="cross-link" description="Glycyl lysine isopeptide (Lys-Gly) (interchain with G-Cter in ubiquitin)">
    <location>
        <position position="63"/>
    </location>
</feature>
<feature type="cross-link" description="Glycyl lysine isopeptide (Gly-Lys) (interchain with K-? in acceptor proteins)" evidence="2">
    <location>
        <position position="76"/>
    </location>
</feature>
<keyword id="KW-0963">Cytoplasm</keyword>
<keyword id="KW-1017">Isopeptide bond</keyword>
<keyword id="KW-0539">Nucleus</keyword>
<keyword id="KW-0677">Repeat</keyword>
<keyword id="KW-0832">Ubl conjugation</keyword>
<evidence type="ECO:0000250" key="1"/>
<evidence type="ECO:0000255" key="2">
    <source>
        <dbReference type="PROSITE-ProRule" id="PRU00214"/>
    </source>
</evidence>
<evidence type="ECO:0000305" key="3"/>
<dbReference type="EMBL" id="X55717">
    <property type="protein sequence ID" value="CAA39250.1"/>
    <property type="molecule type" value="Genomic_DNA"/>
</dbReference>
<dbReference type="PIR" id="S17740">
    <property type="entry name" value="UQJNI"/>
</dbReference>
<dbReference type="SMR" id="P22589"/>
<dbReference type="VEuPathDB" id="FungiDB:PITG_16311"/>
<dbReference type="GO" id="GO:0005737">
    <property type="term" value="C:cytoplasm"/>
    <property type="evidence" value="ECO:0007669"/>
    <property type="project" value="UniProtKB-SubCell"/>
</dbReference>
<dbReference type="GO" id="GO:0005634">
    <property type="term" value="C:nucleus"/>
    <property type="evidence" value="ECO:0007669"/>
    <property type="project" value="UniProtKB-SubCell"/>
</dbReference>
<dbReference type="CDD" id="cd01803">
    <property type="entry name" value="Ubl_ubiquitin"/>
    <property type="match status" value="3"/>
</dbReference>
<dbReference type="FunFam" id="3.10.20.90:FF:000158">
    <property type="entry name" value="Polyubiquitin 5"/>
    <property type="match status" value="3"/>
</dbReference>
<dbReference type="Gene3D" id="3.10.20.90">
    <property type="entry name" value="Phosphatidylinositol 3-kinase Catalytic Subunit, Chain A, domain 1"/>
    <property type="match status" value="3"/>
</dbReference>
<dbReference type="InterPro" id="IPR000626">
    <property type="entry name" value="Ubiquitin-like_dom"/>
</dbReference>
<dbReference type="InterPro" id="IPR029071">
    <property type="entry name" value="Ubiquitin-like_domsf"/>
</dbReference>
<dbReference type="InterPro" id="IPR019954">
    <property type="entry name" value="Ubiquitin_CS"/>
</dbReference>
<dbReference type="InterPro" id="IPR019956">
    <property type="entry name" value="Ubiquitin_dom"/>
</dbReference>
<dbReference type="InterPro" id="IPR050158">
    <property type="entry name" value="Ubiquitin_ubiquitin-like"/>
</dbReference>
<dbReference type="PANTHER" id="PTHR10666">
    <property type="entry name" value="UBIQUITIN"/>
    <property type="match status" value="1"/>
</dbReference>
<dbReference type="Pfam" id="PF00240">
    <property type="entry name" value="ubiquitin"/>
    <property type="match status" value="3"/>
</dbReference>
<dbReference type="PRINTS" id="PR00348">
    <property type="entry name" value="UBIQUITIN"/>
</dbReference>
<dbReference type="SMART" id="SM00213">
    <property type="entry name" value="UBQ"/>
    <property type="match status" value="3"/>
</dbReference>
<dbReference type="SUPFAM" id="SSF54236">
    <property type="entry name" value="Ubiquitin-like"/>
    <property type="match status" value="3"/>
</dbReference>
<dbReference type="PROSITE" id="PS00299">
    <property type="entry name" value="UBIQUITIN_1"/>
    <property type="match status" value="3"/>
</dbReference>
<dbReference type="PROSITE" id="PS50053">
    <property type="entry name" value="UBIQUITIN_2"/>
    <property type="match status" value="3"/>
</dbReference>
<comment type="function">
    <text evidence="1">Ubiquitin exists either covalently attached to another protein, or free (unanchored). When covalently bound, it is conjugated to target proteins via an isopeptide bond either as a monomer (monoubiquitin), a polymer linked via different Lys residues of the ubiquitin (polyubiquitin chains) or a linear polymer linked via the initiator Met of the ubiquitin (linear polyubiquitin chains). Polyubiquitin chains, when attached to a target protein, have different functions depending on the Lys residue of the ubiquitin that is linked: Lys-6-linked may be involved in DNA repair; Lys-11-linked is involved in ERAD (endoplasmic reticulum-associated degradation) and in cell-cycle regulation; Lys-29-linked is involved in lysosomal degradation; Lys-33-linked is involved in kinase modification; Lys-48-linked is involved in protein degradation via the proteasome; Lys-63-linked is involved in endocytosis, DNA-damage responses as well as in signaling processes leading to activation of the transcription factor NF-kappa-B. Linear polymer chains formed via attachment by the initiator Met lead to cell signaling. Ubiquitin is usually conjugated to Lys residues of target proteins, however, in rare cases, conjugation to Cys or Ser residues has been observed. When polyubiquitin is free (unanchored-polyubiquitin), it also has distinct roles, such as in activation of protein kinases, and in signaling (By similarity).</text>
</comment>
<comment type="subcellular location">
    <subcellularLocation>
        <location evidence="1">Cytoplasm</location>
    </subcellularLocation>
    <subcellularLocation>
        <location evidence="1">Nucleus</location>
    </subcellularLocation>
</comment>
<comment type="miscellaneous">
    <text>For the sake of clarity sequence features are annotated only for the first chain, and are not repeated for each of the following chains.</text>
</comment>
<comment type="similarity">
    <text evidence="3">Belongs to the ubiquitin family.</text>
</comment>
<accession>P22589</accession>